<dbReference type="EMBL" id="CP001196">
    <property type="protein sequence ID" value="ACI94633.1"/>
    <property type="molecule type" value="Genomic_DNA"/>
</dbReference>
<dbReference type="EMBL" id="CP002826">
    <property type="protein sequence ID" value="AEI05333.1"/>
    <property type="molecule type" value="Genomic_DNA"/>
</dbReference>
<dbReference type="SMR" id="B6JJN9"/>
<dbReference type="STRING" id="504832.OCA5_c06090"/>
<dbReference type="KEGG" id="oca:OCAR_7531"/>
<dbReference type="KEGG" id="ocg:OCA5_c06090"/>
<dbReference type="PATRIC" id="fig|504832.7.peg.637"/>
<dbReference type="eggNOG" id="COG0218">
    <property type="taxonomic scope" value="Bacteria"/>
</dbReference>
<dbReference type="HOGENOM" id="CLU_033732_2_0_5"/>
<dbReference type="OrthoDB" id="9804921at2"/>
<dbReference type="Proteomes" id="UP000007730">
    <property type="component" value="Chromosome"/>
</dbReference>
<dbReference type="GO" id="GO:0005829">
    <property type="term" value="C:cytosol"/>
    <property type="evidence" value="ECO:0007669"/>
    <property type="project" value="TreeGrafter"/>
</dbReference>
<dbReference type="GO" id="GO:0005525">
    <property type="term" value="F:GTP binding"/>
    <property type="evidence" value="ECO:0007669"/>
    <property type="project" value="UniProtKB-UniRule"/>
</dbReference>
<dbReference type="GO" id="GO:0046872">
    <property type="term" value="F:metal ion binding"/>
    <property type="evidence" value="ECO:0007669"/>
    <property type="project" value="UniProtKB-KW"/>
</dbReference>
<dbReference type="GO" id="GO:0000917">
    <property type="term" value="P:division septum assembly"/>
    <property type="evidence" value="ECO:0007669"/>
    <property type="project" value="UniProtKB-KW"/>
</dbReference>
<dbReference type="CDD" id="cd01876">
    <property type="entry name" value="YihA_EngB"/>
    <property type="match status" value="1"/>
</dbReference>
<dbReference type="Gene3D" id="3.40.50.300">
    <property type="entry name" value="P-loop containing nucleotide triphosphate hydrolases"/>
    <property type="match status" value="1"/>
</dbReference>
<dbReference type="HAMAP" id="MF_00321">
    <property type="entry name" value="GTPase_EngB"/>
    <property type="match status" value="1"/>
</dbReference>
<dbReference type="InterPro" id="IPR030393">
    <property type="entry name" value="G_ENGB_dom"/>
</dbReference>
<dbReference type="InterPro" id="IPR006073">
    <property type="entry name" value="GTP-bd"/>
</dbReference>
<dbReference type="InterPro" id="IPR019987">
    <property type="entry name" value="GTP-bd_ribosome_bio_YsxC"/>
</dbReference>
<dbReference type="InterPro" id="IPR027417">
    <property type="entry name" value="P-loop_NTPase"/>
</dbReference>
<dbReference type="NCBIfam" id="TIGR03598">
    <property type="entry name" value="GTPase_YsxC"/>
    <property type="match status" value="1"/>
</dbReference>
<dbReference type="PANTHER" id="PTHR11649:SF13">
    <property type="entry name" value="ENGB-TYPE G DOMAIN-CONTAINING PROTEIN"/>
    <property type="match status" value="1"/>
</dbReference>
<dbReference type="PANTHER" id="PTHR11649">
    <property type="entry name" value="MSS1/TRME-RELATED GTP-BINDING PROTEIN"/>
    <property type="match status" value="1"/>
</dbReference>
<dbReference type="Pfam" id="PF01926">
    <property type="entry name" value="MMR_HSR1"/>
    <property type="match status" value="1"/>
</dbReference>
<dbReference type="SUPFAM" id="SSF52540">
    <property type="entry name" value="P-loop containing nucleoside triphosphate hydrolases"/>
    <property type="match status" value="1"/>
</dbReference>
<dbReference type="PROSITE" id="PS51706">
    <property type="entry name" value="G_ENGB"/>
    <property type="match status" value="1"/>
</dbReference>
<sequence>MTNDPDAELIEAGRKLFAGDWQFFWASPSIETLPPMQGIEIALAGRSNVGKSSLINALTGRNALARTSHTPGRTQELIFFKGPGPLDAQTPELRLVDMPGYGYASAPKTKIASWTTLIHRYLLGRANLARVYVLIDSRHGFKDADDEVLTTLDKSAVSYQIVLTKTDQVKKSALDETMAAMAEKLRKHPAAYPEMLVTSSRDGAGMAEMRAAIVKLLRERA</sequence>
<organism>
    <name type="scientific">Afipia carboxidovorans (strain ATCC 49405 / DSM 1227 / KCTC 32145 / OM5)</name>
    <name type="common">Oligotropha carboxidovorans</name>
    <dbReference type="NCBI Taxonomy" id="504832"/>
    <lineage>
        <taxon>Bacteria</taxon>
        <taxon>Pseudomonadati</taxon>
        <taxon>Pseudomonadota</taxon>
        <taxon>Alphaproteobacteria</taxon>
        <taxon>Hyphomicrobiales</taxon>
        <taxon>Nitrobacteraceae</taxon>
        <taxon>Afipia</taxon>
    </lineage>
</organism>
<evidence type="ECO:0000255" key="1">
    <source>
        <dbReference type="HAMAP-Rule" id="MF_00321"/>
    </source>
</evidence>
<name>ENGB_AFIC5</name>
<feature type="chain" id="PRO_1000115990" description="Probable GTP-binding protein EngB">
    <location>
        <begin position="1"/>
        <end position="221"/>
    </location>
</feature>
<feature type="domain" description="EngB-type G" evidence="1">
    <location>
        <begin position="37"/>
        <end position="219"/>
    </location>
</feature>
<feature type="binding site" evidence="1">
    <location>
        <begin position="45"/>
        <end position="52"/>
    </location>
    <ligand>
        <name>GTP</name>
        <dbReference type="ChEBI" id="CHEBI:37565"/>
    </ligand>
</feature>
<feature type="binding site" evidence="1">
    <location>
        <position position="52"/>
    </location>
    <ligand>
        <name>Mg(2+)</name>
        <dbReference type="ChEBI" id="CHEBI:18420"/>
    </ligand>
</feature>
<feature type="binding site" evidence="1">
    <location>
        <begin position="72"/>
        <end position="76"/>
    </location>
    <ligand>
        <name>GTP</name>
        <dbReference type="ChEBI" id="CHEBI:37565"/>
    </ligand>
</feature>
<feature type="binding site" evidence="1">
    <location>
        <position position="74"/>
    </location>
    <ligand>
        <name>Mg(2+)</name>
        <dbReference type="ChEBI" id="CHEBI:18420"/>
    </ligand>
</feature>
<feature type="binding site" evidence="1">
    <location>
        <begin position="97"/>
        <end position="100"/>
    </location>
    <ligand>
        <name>GTP</name>
        <dbReference type="ChEBI" id="CHEBI:37565"/>
    </ligand>
</feature>
<feature type="binding site" evidence="1">
    <location>
        <begin position="164"/>
        <end position="167"/>
    </location>
    <ligand>
        <name>GTP</name>
        <dbReference type="ChEBI" id="CHEBI:37565"/>
    </ligand>
</feature>
<feature type="binding site" evidence="1">
    <location>
        <begin position="198"/>
        <end position="200"/>
    </location>
    <ligand>
        <name>GTP</name>
        <dbReference type="ChEBI" id="CHEBI:37565"/>
    </ligand>
</feature>
<comment type="function">
    <text evidence="1">Necessary for normal cell division and for the maintenance of normal septation.</text>
</comment>
<comment type="cofactor">
    <cofactor evidence="1">
        <name>Mg(2+)</name>
        <dbReference type="ChEBI" id="CHEBI:18420"/>
    </cofactor>
</comment>
<comment type="similarity">
    <text evidence="1">Belongs to the TRAFAC class TrmE-Era-EngA-EngB-Septin-like GTPase superfamily. EngB GTPase family.</text>
</comment>
<gene>
    <name evidence="1" type="primary">engB</name>
    <name type="ordered locus">OCAR_7531</name>
    <name type="ordered locus">OCA5_c06090</name>
</gene>
<keyword id="KW-0131">Cell cycle</keyword>
<keyword id="KW-0132">Cell division</keyword>
<keyword id="KW-0342">GTP-binding</keyword>
<keyword id="KW-0460">Magnesium</keyword>
<keyword id="KW-0479">Metal-binding</keyword>
<keyword id="KW-0547">Nucleotide-binding</keyword>
<keyword id="KW-1185">Reference proteome</keyword>
<keyword id="KW-0717">Septation</keyword>
<reference key="1">
    <citation type="journal article" date="2008" name="J. Bacteriol.">
        <title>Genome sequence of the chemolithoautotrophic bacterium Oligotropha carboxidovorans OM5T.</title>
        <authorList>
            <person name="Paul D."/>
            <person name="Bridges S."/>
            <person name="Burgess S.C."/>
            <person name="Dandass Y."/>
            <person name="Lawrence M.L."/>
        </authorList>
    </citation>
    <scope>NUCLEOTIDE SEQUENCE [LARGE SCALE GENOMIC DNA]</scope>
    <source>
        <strain>ATCC 49405 / DSM 1227 / KCTC 32145 / OM5</strain>
    </source>
</reference>
<reference key="2">
    <citation type="journal article" date="2011" name="J. Bacteriol.">
        <title>Complete genome sequences of the chemolithoautotrophic Oligotropha carboxidovorans strains OM4 and OM5.</title>
        <authorList>
            <person name="Volland S."/>
            <person name="Rachinger M."/>
            <person name="Strittmatter A."/>
            <person name="Daniel R."/>
            <person name="Gottschalk G."/>
            <person name="Meyer O."/>
        </authorList>
    </citation>
    <scope>NUCLEOTIDE SEQUENCE [LARGE SCALE GENOMIC DNA]</scope>
    <source>
        <strain>ATCC 49405 / DSM 1227 / KCTC 32145 / OM5</strain>
    </source>
</reference>
<accession>B6JJN9</accession>
<accession>F8BWY1</accession>
<protein>
    <recommendedName>
        <fullName evidence="1">Probable GTP-binding protein EngB</fullName>
    </recommendedName>
</protein>
<proteinExistence type="inferred from homology"/>